<organism>
    <name type="scientific">Leptospira interrogans serogroup Icterohaemorrhagiae serovar Lai (strain 56601)</name>
    <dbReference type="NCBI Taxonomy" id="189518"/>
    <lineage>
        <taxon>Bacteria</taxon>
        <taxon>Pseudomonadati</taxon>
        <taxon>Spirochaetota</taxon>
        <taxon>Spirochaetia</taxon>
        <taxon>Leptospirales</taxon>
        <taxon>Leptospiraceae</taxon>
        <taxon>Leptospira</taxon>
    </lineage>
</organism>
<feature type="chain" id="PRO_0000162977" description="NADPH-dependent 7-cyano-7-deazaguanine reductase">
    <location>
        <begin position="1"/>
        <end position="133"/>
    </location>
</feature>
<feature type="active site" description="Thioimide intermediate" evidence="1">
    <location>
        <position position="49"/>
    </location>
</feature>
<feature type="active site" description="Proton donor" evidence="1">
    <location>
        <position position="56"/>
    </location>
</feature>
<feature type="binding site" evidence="1">
    <location>
        <begin position="71"/>
        <end position="73"/>
    </location>
    <ligand>
        <name>substrate</name>
    </ligand>
</feature>
<feature type="binding site" evidence="1">
    <location>
        <begin position="90"/>
        <end position="91"/>
    </location>
    <ligand>
        <name>substrate</name>
    </ligand>
</feature>
<keyword id="KW-0963">Cytoplasm</keyword>
<keyword id="KW-0521">NADP</keyword>
<keyword id="KW-0560">Oxidoreductase</keyword>
<keyword id="KW-0671">Queuosine biosynthesis</keyword>
<keyword id="KW-1185">Reference proteome</keyword>
<protein>
    <recommendedName>
        <fullName evidence="1">NADPH-dependent 7-cyano-7-deazaguanine reductase</fullName>
        <ecNumber evidence="1">1.7.1.13</ecNumber>
    </recommendedName>
    <alternativeName>
        <fullName evidence="1">7-cyano-7-carbaguanine reductase</fullName>
    </alternativeName>
    <alternativeName>
        <fullName evidence="1">NADPH-dependent nitrile oxidoreductase</fullName>
    </alternativeName>
    <alternativeName>
        <fullName evidence="1">PreQ(0) reductase</fullName>
    </alternativeName>
</protein>
<dbReference type="EC" id="1.7.1.13" evidence="1"/>
<dbReference type="EMBL" id="AE010300">
    <property type="protein sequence ID" value="AAN49284.2"/>
    <property type="molecule type" value="Genomic_DNA"/>
</dbReference>
<dbReference type="RefSeq" id="WP_000856053.1">
    <property type="nucleotide sequence ID" value="NC_004342.2"/>
</dbReference>
<dbReference type="SMR" id="Q8F4F6"/>
<dbReference type="STRING" id="189518.LA_2085"/>
<dbReference type="PaxDb" id="189518-LA_2085"/>
<dbReference type="EnsemblBacteria" id="AAN49284">
    <property type="protein sequence ID" value="AAN49284"/>
    <property type="gene ID" value="LA_2085"/>
</dbReference>
<dbReference type="GeneID" id="61141729"/>
<dbReference type="KEGG" id="lil:LA_2085"/>
<dbReference type="HOGENOM" id="CLU_102489_1_0_12"/>
<dbReference type="InParanoid" id="Q8F4F6"/>
<dbReference type="UniPathway" id="UPA00392"/>
<dbReference type="Proteomes" id="UP000001408">
    <property type="component" value="Chromosome I"/>
</dbReference>
<dbReference type="GO" id="GO:0005829">
    <property type="term" value="C:cytosol"/>
    <property type="evidence" value="ECO:0000318"/>
    <property type="project" value="GO_Central"/>
</dbReference>
<dbReference type="GO" id="GO:0033739">
    <property type="term" value="F:preQ1 synthase activity"/>
    <property type="evidence" value="ECO:0000318"/>
    <property type="project" value="GO_Central"/>
</dbReference>
<dbReference type="GO" id="GO:0008616">
    <property type="term" value="P:queuosine biosynthetic process"/>
    <property type="evidence" value="ECO:0000318"/>
    <property type="project" value="GO_Central"/>
</dbReference>
<dbReference type="GO" id="GO:0006400">
    <property type="term" value="P:tRNA modification"/>
    <property type="evidence" value="ECO:0007669"/>
    <property type="project" value="UniProtKB-UniRule"/>
</dbReference>
<dbReference type="Gene3D" id="3.30.1130.10">
    <property type="match status" value="1"/>
</dbReference>
<dbReference type="HAMAP" id="MF_00818">
    <property type="entry name" value="QueF_type1"/>
    <property type="match status" value="1"/>
</dbReference>
<dbReference type="InterPro" id="IPR043133">
    <property type="entry name" value="GTP-CH-I_C/QueF"/>
</dbReference>
<dbReference type="InterPro" id="IPR050084">
    <property type="entry name" value="NADPH_dep_7-cyano-7-deazaG_red"/>
</dbReference>
<dbReference type="InterPro" id="IPR029500">
    <property type="entry name" value="QueF"/>
</dbReference>
<dbReference type="InterPro" id="IPR016856">
    <property type="entry name" value="QueF_type1"/>
</dbReference>
<dbReference type="NCBIfam" id="TIGR03139">
    <property type="entry name" value="QueF-II"/>
    <property type="match status" value="1"/>
</dbReference>
<dbReference type="PANTHER" id="PTHR34354">
    <property type="entry name" value="NADPH-DEPENDENT 7-CYANO-7-DEAZAGUANINE REDUCTASE"/>
    <property type="match status" value="1"/>
</dbReference>
<dbReference type="PANTHER" id="PTHR34354:SF1">
    <property type="entry name" value="NADPH-DEPENDENT 7-CYANO-7-DEAZAGUANINE REDUCTASE"/>
    <property type="match status" value="1"/>
</dbReference>
<dbReference type="Pfam" id="PF14489">
    <property type="entry name" value="QueF"/>
    <property type="match status" value="1"/>
</dbReference>
<dbReference type="PIRSF" id="PIRSF027377">
    <property type="entry name" value="Nitrile_oxidored_QueF"/>
    <property type="match status" value="1"/>
</dbReference>
<dbReference type="SUPFAM" id="SSF55620">
    <property type="entry name" value="Tetrahydrobiopterin biosynthesis enzymes-like"/>
    <property type="match status" value="1"/>
</dbReference>
<name>QUEF_LEPIN</name>
<reference key="1">
    <citation type="journal article" date="2003" name="Nature">
        <title>Unique physiological and pathogenic features of Leptospira interrogans revealed by whole-genome sequencing.</title>
        <authorList>
            <person name="Ren S.-X."/>
            <person name="Fu G."/>
            <person name="Jiang X.-G."/>
            <person name="Zeng R."/>
            <person name="Miao Y.-G."/>
            <person name="Xu H."/>
            <person name="Zhang Y.-X."/>
            <person name="Xiong H."/>
            <person name="Lu G."/>
            <person name="Lu L.-F."/>
            <person name="Jiang H.-Q."/>
            <person name="Jia J."/>
            <person name="Tu Y.-F."/>
            <person name="Jiang J.-X."/>
            <person name="Gu W.-Y."/>
            <person name="Zhang Y.-Q."/>
            <person name="Cai Z."/>
            <person name="Sheng H.-H."/>
            <person name="Yin H.-F."/>
            <person name="Zhang Y."/>
            <person name="Zhu G.-F."/>
            <person name="Wan M."/>
            <person name="Huang H.-L."/>
            <person name="Qian Z."/>
            <person name="Wang S.-Y."/>
            <person name="Ma W."/>
            <person name="Yao Z.-J."/>
            <person name="Shen Y."/>
            <person name="Qiang B.-Q."/>
            <person name="Xia Q.-C."/>
            <person name="Guo X.-K."/>
            <person name="Danchin A."/>
            <person name="Saint Girons I."/>
            <person name="Somerville R.L."/>
            <person name="Wen Y.-M."/>
            <person name="Shi M.-H."/>
            <person name="Chen Z."/>
            <person name="Xu J.-G."/>
            <person name="Zhao G.-P."/>
        </authorList>
    </citation>
    <scope>NUCLEOTIDE SEQUENCE [LARGE SCALE GENOMIC DNA]</scope>
    <source>
        <strain>56601</strain>
    </source>
</reference>
<evidence type="ECO:0000255" key="1">
    <source>
        <dbReference type="HAMAP-Rule" id="MF_00818"/>
    </source>
</evidence>
<sequence length="133" mass="15353">MKTNHPETYDGRQDHIPSLQTPEIESFTNVYEGKDYTIDFTVPEFTAVCPKTGLPDFGVILVSYIPNKRCIELKSFKEYILSYRNVGIFHEFLVNKILEDVIKSIDPKYLKVIGDYNARGGIKTIVTREYKKP</sequence>
<proteinExistence type="inferred from homology"/>
<accession>Q8F4F6</accession>
<gene>
    <name evidence="1" type="primary">queF</name>
    <name type="ordered locus">LA_2085</name>
</gene>
<comment type="function">
    <text evidence="1">Catalyzes the NADPH-dependent reduction of 7-cyano-7-deazaguanine (preQ0) to 7-aminomethyl-7-deazaguanine (preQ1).</text>
</comment>
<comment type="catalytic activity">
    <reaction evidence="1">
        <text>7-aminomethyl-7-carbaguanine + 2 NADP(+) = 7-cyano-7-deazaguanine + 2 NADPH + 3 H(+)</text>
        <dbReference type="Rhea" id="RHEA:13409"/>
        <dbReference type="ChEBI" id="CHEBI:15378"/>
        <dbReference type="ChEBI" id="CHEBI:45075"/>
        <dbReference type="ChEBI" id="CHEBI:57783"/>
        <dbReference type="ChEBI" id="CHEBI:58349"/>
        <dbReference type="ChEBI" id="CHEBI:58703"/>
        <dbReference type="EC" id="1.7.1.13"/>
    </reaction>
</comment>
<comment type="pathway">
    <text evidence="1">tRNA modification; tRNA-queuosine biosynthesis.</text>
</comment>
<comment type="subcellular location">
    <subcellularLocation>
        <location evidence="1">Cytoplasm</location>
    </subcellularLocation>
</comment>
<comment type="similarity">
    <text evidence="1">Belongs to the GTP cyclohydrolase I family. QueF type 1 subfamily.</text>
</comment>